<proteinExistence type="inferred from homology"/>
<sequence>MPNNVTVQELVDKVRLKVLQGEDYLQRKITTSDISRPALEFAGYFKHYPAARIQLLGITETSFAKDLTHEQREEYMTKMCMPQTPCFVISTNLPIPKELKKAAEDAKIPILGTHLTSSQILSNMTSYLLERLAPRKSLHGVLVDISGVGVLITGDSGVGKSETALELVRRGHRLIADDRVEVYARDEQTLVGTAPQILKHLMEIRGIGIIDVSTLYGTGAIMPSDQISLIVHLETWTPDVQFDRLGDRGDTQTIQGVIVPKVSVPVKTGRNLAIIIESAAMNYRAETMGYDATETFDRNLNQLIKQNSERDSKNNKGSAN</sequence>
<reference key="1">
    <citation type="journal article" date="2011" name="PLoS Genet.">
        <title>The evolution of host specialization in the vertebrate gut symbiont Lactobacillus reuteri.</title>
        <authorList>
            <person name="Frese S.A."/>
            <person name="Benson A.K."/>
            <person name="Tannock G.W."/>
            <person name="Loach D.M."/>
            <person name="Kim J."/>
            <person name="Zhang M."/>
            <person name="Oh P.L."/>
            <person name="Heng N.C."/>
            <person name="Patil P.B."/>
            <person name="Juge N."/>
            <person name="Mackenzie D.A."/>
            <person name="Pearson B.M."/>
            <person name="Lapidus A."/>
            <person name="Dalin E."/>
            <person name="Tice H."/>
            <person name="Goltsman E."/>
            <person name="Land M."/>
            <person name="Hauser L."/>
            <person name="Ivanova N."/>
            <person name="Kyrpides N.C."/>
            <person name="Walter J."/>
        </authorList>
    </citation>
    <scope>NUCLEOTIDE SEQUENCE [LARGE SCALE GENOMIC DNA]</scope>
    <source>
        <strain>DSM 20016</strain>
    </source>
</reference>
<comment type="function">
    <text evidence="1">Catalyzes the ATP- as well as the pyrophosphate-dependent phosphorylation of a specific serine residue in HPr, a phosphocarrier protein of the phosphoenolpyruvate-dependent sugar phosphotransferase system (PTS). HprK/P also catalyzes the pyrophosphate-producing, inorganic phosphate-dependent dephosphorylation (phosphorolysis) of seryl-phosphorylated HPr (P-Ser-HPr). The two antagonistic activities of HprK/P are regulated by several intracellular metabolites, which change their concentration in response to the absence or presence of rapidly metabolisable carbon sources (glucose, fructose, etc.) in the growth medium. Therefore, by controlling the phosphorylation state of HPr, HPrK/P is a sensor enzyme that plays a major role in the regulation of carbon metabolism and sugar transport: it mediates carbon catabolite repression (CCR), and regulates PTS-catalyzed carbohydrate uptake and inducer exclusion.</text>
</comment>
<comment type="catalytic activity">
    <reaction evidence="1">
        <text>[HPr protein]-L-serine + ATP = [HPr protein]-O-phospho-L-serine + ADP + H(+)</text>
        <dbReference type="Rhea" id="RHEA:46600"/>
        <dbReference type="Rhea" id="RHEA-COMP:11602"/>
        <dbReference type="Rhea" id="RHEA-COMP:11603"/>
        <dbReference type="ChEBI" id="CHEBI:15378"/>
        <dbReference type="ChEBI" id="CHEBI:29999"/>
        <dbReference type="ChEBI" id="CHEBI:30616"/>
        <dbReference type="ChEBI" id="CHEBI:83421"/>
        <dbReference type="ChEBI" id="CHEBI:456216"/>
    </reaction>
</comment>
<comment type="catalytic activity">
    <reaction evidence="1">
        <text>[HPr protein]-O-phospho-L-serine + phosphate + H(+) = [HPr protein]-L-serine + diphosphate</text>
        <dbReference type="Rhea" id="RHEA:46604"/>
        <dbReference type="Rhea" id="RHEA-COMP:11602"/>
        <dbReference type="Rhea" id="RHEA-COMP:11603"/>
        <dbReference type="ChEBI" id="CHEBI:15378"/>
        <dbReference type="ChEBI" id="CHEBI:29999"/>
        <dbReference type="ChEBI" id="CHEBI:33019"/>
        <dbReference type="ChEBI" id="CHEBI:43474"/>
        <dbReference type="ChEBI" id="CHEBI:83421"/>
    </reaction>
</comment>
<comment type="cofactor">
    <cofactor evidence="1">
        <name>Mg(2+)</name>
        <dbReference type="ChEBI" id="CHEBI:18420"/>
    </cofactor>
</comment>
<comment type="subunit">
    <text evidence="1">Homohexamer.</text>
</comment>
<comment type="domain">
    <text evidence="1">The Walker A ATP-binding motif also binds Pi and PPi.</text>
</comment>
<comment type="miscellaneous">
    <text evidence="1">Both phosphorylation and phosphorolysis are carried out by the same active site and suggest a common mechanism for both reactions.</text>
</comment>
<comment type="similarity">
    <text evidence="1">Belongs to the HPrK/P family.</text>
</comment>
<dbReference type="EC" id="2.7.11.-" evidence="1"/>
<dbReference type="EC" id="2.7.4.-" evidence="1"/>
<dbReference type="EMBL" id="CP000705">
    <property type="protein sequence ID" value="ABQ82638.1"/>
    <property type="molecule type" value="Genomic_DNA"/>
</dbReference>
<dbReference type="RefSeq" id="WP_003666394.1">
    <property type="nucleotide sequence ID" value="NZ_AZDD01000014.1"/>
</dbReference>
<dbReference type="SMR" id="A5VIG4"/>
<dbReference type="STRING" id="557436.Lreu_0369"/>
<dbReference type="GeneID" id="77190173"/>
<dbReference type="KEGG" id="lre:Lreu_0369"/>
<dbReference type="PATRIC" id="fig|557436.17.peg.409"/>
<dbReference type="eggNOG" id="COG1493">
    <property type="taxonomic scope" value="Bacteria"/>
</dbReference>
<dbReference type="HOGENOM" id="CLU_052030_0_1_9"/>
<dbReference type="Proteomes" id="UP000001991">
    <property type="component" value="Chromosome"/>
</dbReference>
<dbReference type="GO" id="GO:0005524">
    <property type="term" value="F:ATP binding"/>
    <property type="evidence" value="ECO:0007669"/>
    <property type="project" value="UniProtKB-UniRule"/>
</dbReference>
<dbReference type="GO" id="GO:0000287">
    <property type="term" value="F:magnesium ion binding"/>
    <property type="evidence" value="ECO:0007669"/>
    <property type="project" value="UniProtKB-UniRule"/>
</dbReference>
<dbReference type="GO" id="GO:0000155">
    <property type="term" value="F:phosphorelay sensor kinase activity"/>
    <property type="evidence" value="ECO:0007669"/>
    <property type="project" value="InterPro"/>
</dbReference>
<dbReference type="GO" id="GO:0004674">
    <property type="term" value="F:protein serine/threonine kinase activity"/>
    <property type="evidence" value="ECO:0007669"/>
    <property type="project" value="UniProtKB-KW"/>
</dbReference>
<dbReference type="GO" id="GO:0004712">
    <property type="term" value="F:protein serine/threonine/tyrosine kinase activity"/>
    <property type="evidence" value="ECO:0007669"/>
    <property type="project" value="UniProtKB-UniRule"/>
</dbReference>
<dbReference type="GO" id="GO:0006109">
    <property type="term" value="P:regulation of carbohydrate metabolic process"/>
    <property type="evidence" value="ECO:0007669"/>
    <property type="project" value="UniProtKB-UniRule"/>
</dbReference>
<dbReference type="CDD" id="cd01918">
    <property type="entry name" value="HprK_C"/>
    <property type="match status" value="1"/>
</dbReference>
<dbReference type="FunFam" id="3.40.50.300:FF:000174">
    <property type="entry name" value="HPr kinase/phosphorylase"/>
    <property type="match status" value="1"/>
</dbReference>
<dbReference type="Gene3D" id="3.40.1390.20">
    <property type="entry name" value="HprK N-terminal domain-like"/>
    <property type="match status" value="1"/>
</dbReference>
<dbReference type="Gene3D" id="3.40.50.300">
    <property type="entry name" value="P-loop containing nucleotide triphosphate hydrolases"/>
    <property type="match status" value="1"/>
</dbReference>
<dbReference type="HAMAP" id="MF_01249">
    <property type="entry name" value="HPr_kinase"/>
    <property type="match status" value="1"/>
</dbReference>
<dbReference type="InterPro" id="IPR003755">
    <property type="entry name" value="HPr(Ser)_kin/Pase"/>
</dbReference>
<dbReference type="InterPro" id="IPR011104">
    <property type="entry name" value="Hpr_kin/Pase_C"/>
</dbReference>
<dbReference type="InterPro" id="IPR011126">
    <property type="entry name" value="Hpr_kin/Pase_Hpr_N"/>
</dbReference>
<dbReference type="InterPro" id="IPR027417">
    <property type="entry name" value="P-loop_NTPase"/>
</dbReference>
<dbReference type="InterPro" id="IPR028979">
    <property type="entry name" value="Ser_kin/Pase_Hpr-like_N_sf"/>
</dbReference>
<dbReference type="NCBIfam" id="TIGR00679">
    <property type="entry name" value="hpr-ser"/>
    <property type="match status" value="1"/>
</dbReference>
<dbReference type="PANTHER" id="PTHR30305:SF1">
    <property type="entry name" value="HPR KINASE_PHOSPHORYLASE"/>
    <property type="match status" value="1"/>
</dbReference>
<dbReference type="PANTHER" id="PTHR30305">
    <property type="entry name" value="PROTEIN YJDM-RELATED"/>
    <property type="match status" value="1"/>
</dbReference>
<dbReference type="Pfam" id="PF07475">
    <property type="entry name" value="Hpr_kinase_C"/>
    <property type="match status" value="1"/>
</dbReference>
<dbReference type="Pfam" id="PF02603">
    <property type="entry name" value="Hpr_kinase_N"/>
    <property type="match status" value="1"/>
</dbReference>
<dbReference type="SUPFAM" id="SSF75138">
    <property type="entry name" value="HprK N-terminal domain-like"/>
    <property type="match status" value="1"/>
</dbReference>
<dbReference type="SUPFAM" id="SSF53795">
    <property type="entry name" value="PEP carboxykinase-like"/>
    <property type="match status" value="1"/>
</dbReference>
<gene>
    <name evidence="1" type="primary">hprK</name>
    <name type="ordered locus">Lreu_0369</name>
</gene>
<organism>
    <name type="scientific">Limosilactobacillus reuteri (strain DSM 20016)</name>
    <name type="common">Lactobacillus reuteri</name>
    <dbReference type="NCBI Taxonomy" id="557436"/>
    <lineage>
        <taxon>Bacteria</taxon>
        <taxon>Bacillati</taxon>
        <taxon>Bacillota</taxon>
        <taxon>Bacilli</taxon>
        <taxon>Lactobacillales</taxon>
        <taxon>Lactobacillaceae</taxon>
        <taxon>Limosilactobacillus</taxon>
    </lineage>
</organism>
<evidence type="ECO:0000255" key="1">
    <source>
        <dbReference type="HAMAP-Rule" id="MF_01249"/>
    </source>
</evidence>
<keyword id="KW-0067">ATP-binding</keyword>
<keyword id="KW-0119">Carbohydrate metabolism</keyword>
<keyword id="KW-0418">Kinase</keyword>
<keyword id="KW-0460">Magnesium</keyword>
<keyword id="KW-0479">Metal-binding</keyword>
<keyword id="KW-0511">Multifunctional enzyme</keyword>
<keyword id="KW-0547">Nucleotide-binding</keyword>
<keyword id="KW-1185">Reference proteome</keyword>
<keyword id="KW-0723">Serine/threonine-protein kinase</keyword>
<keyword id="KW-0808">Transferase</keyword>
<name>HPRK_LIMRD</name>
<accession>A5VIG4</accession>
<protein>
    <recommendedName>
        <fullName evidence="1">HPr kinase/phosphorylase</fullName>
        <shortName evidence="1">HPrK/P</shortName>
        <ecNumber evidence="1">2.7.11.-</ecNumber>
        <ecNumber evidence="1">2.7.4.-</ecNumber>
    </recommendedName>
    <alternativeName>
        <fullName evidence="1">HPr(Ser) kinase/phosphorylase</fullName>
    </alternativeName>
</protein>
<feature type="chain" id="PRO_1000067155" description="HPr kinase/phosphorylase">
    <location>
        <begin position="1"/>
        <end position="320"/>
    </location>
</feature>
<feature type="region of interest" description="Important for the catalytic mechanism of both phosphorylation and dephosphorylation" evidence="1">
    <location>
        <begin position="202"/>
        <end position="211"/>
    </location>
</feature>
<feature type="region of interest" description="Important for the catalytic mechanism of dephosphorylation" evidence="1">
    <location>
        <begin position="265"/>
        <end position="270"/>
    </location>
</feature>
<feature type="active site" evidence="1">
    <location>
        <position position="139"/>
    </location>
</feature>
<feature type="active site" evidence="1">
    <location>
        <position position="160"/>
    </location>
</feature>
<feature type="active site" description="Proton acceptor; for phosphorylation activity. Proton donor; for dephosphorylation activity" evidence="1">
    <location>
        <position position="178"/>
    </location>
</feature>
<feature type="active site" evidence="1">
    <location>
        <position position="244"/>
    </location>
</feature>
<feature type="binding site" evidence="1">
    <location>
        <begin position="154"/>
        <end position="161"/>
    </location>
    <ligand>
        <name>ATP</name>
        <dbReference type="ChEBI" id="CHEBI:30616"/>
    </ligand>
</feature>
<feature type="binding site" evidence="1">
    <location>
        <position position="161"/>
    </location>
    <ligand>
        <name>Mg(2+)</name>
        <dbReference type="ChEBI" id="CHEBI:18420"/>
    </ligand>
</feature>
<feature type="binding site" evidence="1">
    <location>
        <position position="203"/>
    </location>
    <ligand>
        <name>Mg(2+)</name>
        <dbReference type="ChEBI" id="CHEBI:18420"/>
    </ligand>
</feature>